<sequence length="128" mass="14225">MKKMLVEFRDFALKGNVLDLAVAVVIGAAFGKIVSSLVDNIIMPLVGVLLGGLDFTDLSFKVGKSVIQYGAFIQSIVDFVIIAFAIFIFVKVLTSFIKKKEQTVEETPVPPTEEYLKEIRDLLKEQQK</sequence>
<keyword id="KW-1003">Cell membrane</keyword>
<keyword id="KW-0407">Ion channel</keyword>
<keyword id="KW-0406">Ion transport</keyword>
<keyword id="KW-0472">Membrane</keyword>
<keyword id="KW-0812">Transmembrane</keyword>
<keyword id="KW-1133">Transmembrane helix</keyword>
<keyword id="KW-0813">Transport</keyword>
<organism>
    <name type="scientific">Listeria monocytogenes serotype 4b (strain F2365)</name>
    <dbReference type="NCBI Taxonomy" id="265669"/>
    <lineage>
        <taxon>Bacteria</taxon>
        <taxon>Bacillati</taxon>
        <taxon>Bacillota</taxon>
        <taxon>Bacilli</taxon>
        <taxon>Bacillales</taxon>
        <taxon>Listeriaceae</taxon>
        <taxon>Listeria</taxon>
    </lineage>
</organism>
<evidence type="ECO:0000255" key="1">
    <source>
        <dbReference type="HAMAP-Rule" id="MF_00115"/>
    </source>
</evidence>
<feature type="chain" id="PRO_0000192448" description="Large-conductance mechanosensitive channel">
    <location>
        <begin position="1"/>
        <end position="128"/>
    </location>
</feature>
<feature type="transmembrane region" description="Helical" evidence="1">
    <location>
        <begin position="11"/>
        <end position="31"/>
    </location>
</feature>
<feature type="transmembrane region" description="Helical" evidence="1">
    <location>
        <begin position="70"/>
        <end position="90"/>
    </location>
</feature>
<gene>
    <name evidence="1" type="primary">mscL</name>
    <name type="ordered locus">LMOf2365_2095</name>
</gene>
<proteinExistence type="inferred from homology"/>
<protein>
    <recommendedName>
        <fullName evidence="1">Large-conductance mechanosensitive channel</fullName>
    </recommendedName>
</protein>
<dbReference type="EMBL" id="AE017262">
    <property type="protein sequence ID" value="AAT04865.1"/>
    <property type="molecule type" value="Genomic_DNA"/>
</dbReference>
<dbReference type="RefSeq" id="WP_003723947.1">
    <property type="nucleotide sequence ID" value="NC_002973.6"/>
</dbReference>
<dbReference type="SMR" id="Q71XV0"/>
<dbReference type="KEGG" id="lmf:LMOf2365_2095"/>
<dbReference type="HOGENOM" id="CLU_095787_0_0_9"/>
<dbReference type="GO" id="GO:0005886">
    <property type="term" value="C:plasma membrane"/>
    <property type="evidence" value="ECO:0007669"/>
    <property type="project" value="UniProtKB-SubCell"/>
</dbReference>
<dbReference type="GO" id="GO:0008381">
    <property type="term" value="F:mechanosensitive monoatomic ion channel activity"/>
    <property type="evidence" value="ECO:0007669"/>
    <property type="project" value="UniProtKB-UniRule"/>
</dbReference>
<dbReference type="FunFam" id="1.10.1200.120:FF:000003">
    <property type="entry name" value="Large-conductance mechanosensitive channel"/>
    <property type="match status" value="1"/>
</dbReference>
<dbReference type="Gene3D" id="1.10.1200.120">
    <property type="entry name" value="Large-conductance mechanosensitive channel, MscL, domain 1"/>
    <property type="match status" value="1"/>
</dbReference>
<dbReference type="HAMAP" id="MF_00115">
    <property type="entry name" value="MscL"/>
    <property type="match status" value="1"/>
</dbReference>
<dbReference type="InterPro" id="IPR019823">
    <property type="entry name" value="Mechanosensitive_channel_CS"/>
</dbReference>
<dbReference type="InterPro" id="IPR001185">
    <property type="entry name" value="MS_channel"/>
</dbReference>
<dbReference type="InterPro" id="IPR037673">
    <property type="entry name" value="MSC/AndL"/>
</dbReference>
<dbReference type="InterPro" id="IPR036019">
    <property type="entry name" value="MscL_channel"/>
</dbReference>
<dbReference type="NCBIfam" id="TIGR00220">
    <property type="entry name" value="mscL"/>
    <property type="match status" value="1"/>
</dbReference>
<dbReference type="NCBIfam" id="NF001843">
    <property type="entry name" value="PRK00567.1-4"/>
    <property type="match status" value="1"/>
</dbReference>
<dbReference type="NCBIfam" id="NF010558">
    <property type="entry name" value="PRK13953.1"/>
    <property type="match status" value="1"/>
</dbReference>
<dbReference type="PANTHER" id="PTHR30266:SF2">
    <property type="entry name" value="LARGE-CONDUCTANCE MECHANOSENSITIVE CHANNEL"/>
    <property type="match status" value="1"/>
</dbReference>
<dbReference type="PANTHER" id="PTHR30266">
    <property type="entry name" value="MECHANOSENSITIVE CHANNEL MSCL"/>
    <property type="match status" value="1"/>
</dbReference>
<dbReference type="Pfam" id="PF01741">
    <property type="entry name" value="MscL"/>
    <property type="match status" value="1"/>
</dbReference>
<dbReference type="PRINTS" id="PR01264">
    <property type="entry name" value="MECHCHANNEL"/>
</dbReference>
<dbReference type="SUPFAM" id="SSF81330">
    <property type="entry name" value="Gated mechanosensitive channel"/>
    <property type="match status" value="1"/>
</dbReference>
<dbReference type="PROSITE" id="PS01327">
    <property type="entry name" value="MSCL"/>
    <property type="match status" value="1"/>
</dbReference>
<reference key="1">
    <citation type="journal article" date="2004" name="Nucleic Acids Res.">
        <title>Whole genome comparisons of serotype 4b and 1/2a strains of the food-borne pathogen Listeria monocytogenes reveal new insights into the core genome components of this species.</title>
        <authorList>
            <person name="Nelson K.E."/>
            <person name="Fouts D.E."/>
            <person name="Mongodin E.F."/>
            <person name="Ravel J."/>
            <person name="DeBoy R.T."/>
            <person name="Kolonay J.F."/>
            <person name="Rasko D.A."/>
            <person name="Angiuoli S.V."/>
            <person name="Gill S.R."/>
            <person name="Paulsen I.T."/>
            <person name="Peterson J.D."/>
            <person name="White O."/>
            <person name="Nelson W.C."/>
            <person name="Nierman W.C."/>
            <person name="Beanan M.J."/>
            <person name="Brinkac L.M."/>
            <person name="Daugherty S.C."/>
            <person name="Dodson R.J."/>
            <person name="Durkin A.S."/>
            <person name="Madupu R."/>
            <person name="Haft D.H."/>
            <person name="Selengut J."/>
            <person name="Van Aken S.E."/>
            <person name="Khouri H.M."/>
            <person name="Fedorova N."/>
            <person name="Forberger H.A."/>
            <person name="Tran B."/>
            <person name="Kathariou S."/>
            <person name="Wonderling L.D."/>
            <person name="Uhlich G.A."/>
            <person name="Bayles D.O."/>
            <person name="Luchansky J.B."/>
            <person name="Fraser C.M."/>
        </authorList>
    </citation>
    <scope>NUCLEOTIDE SEQUENCE [LARGE SCALE GENOMIC DNA]</scope>
    <source>
        <strain>F2365</strain>
    </source>
</reference>
<name>MSCL_LISMF</name>
<accession>Q71XV0</accession>
<comment type="function">
    <text evidence="1">Channel that opens in response to stretch forces in the membrane lipid bilayer. May participate in the regulation of osmotic pressure changes within the cell.</text>
</comment>
<comment type="subunit">
    <text evidence="1">Homopentamer.</text>
</comment>
<comment type="subcellular location">
    <subcellularLocation>
        <location evidence="1">Cell membrane</location>
        <topology evidence="1">Multi-pass membrane protein</topology>
    </subcellularLocation>
</comment>
<comment type="similarity">
    <text evidence="1">Belongs to the MscL family.</text>
</comment>